<protein>
    <recommendedName>
        <fullName evidence="6">M-zodatoxin-Lt6a/c</fullName>
        <shortName evidence="6">M-ZDTX-Lt6a/c</shortName>
    </recommendedName>
    <alternativeName>
        <fullName evidence="4">Latarcin 6-2</fullName>
        <shortName evidence="4">Ltc 6-2</shortName>
    </alternativeName>
    <component>
        <recommendedName>
            <fullName evidence="6">M-zodatoxin-Lt6c</fullName>
            <shortName evidence="6">M-ZDTX-Lt6c</shortName>
        </recommendedName>
        <alternativeName>
            <fullName>Latarcin-6c</fullName>
            <shortName>Ltc-6c</shortName>
        </alternativeName>
    </component>
    <component>
        <recommendedName>
            <fullName evidence="6">M-zodatoxin-Lt6a</fullName>
            <shortName evidence="6">M-ZDTX-Lt6a</shortName>
        </recommendedName>
        <alternativeName>
            <fullName evidence="5">Latarcin-6a</fullName>
            <shortName evidence="5">Ltc-6a</shortName>
        </alternativeName>
    </component>
</protein>
<evidence type="ECO:0000255" key="1"/>
<evidence type="ECO:0000269" key="2">
    <source>
    </source>
</evidence>
<evidence type="ECO:0000269" key="3">
    <source>
    </source>
</evidence>
<evidence type="ECO:0000303" key="4">
    <source>
    </source>
</evidence>
<evidence type="ECO:0000303" key="5">
    <source>
    </source>
</evidence>
<evidence type="ECO:0000305" key="6"/>
<evidence type="ECO:0000305" key="7">
    <source>
    </source>
</evidence>
<evidence type="ECO:0000305" key="8">
    <source>
    </source>
</evidence>
<feature type="signal peptide" evidence="1">
    <location>
        <begin position="1"/>
        <end position="22"/>
    </location>
</feature>
<feature type="propeptide" id="PRO_0000249754">
    <location>
        <begin position="23"/>
        <end position="44"/>
    </location>
</feature>
<feature type="peptide" id="PRO_0000249755" description="M-zodatoxin-Lt6c">
    <location>
        <begin position="45"/>
        <end position="79"/>
    </location>
</feature>
<feature type="propeptide" id="PRO_0000249756">
    <location>
        <begin position="80"/>
        <end position="83"/>
    </location>
</feature>
<feature type="peptide" id="PRO_0000249757" description="M-zodatoxin-Lt6a" evidence="3">
    <location>
        <begin position="84"/>
        <end position="116"/>
    </location>
</feature>
<feature type="short sequence motif" description="Processing quadruplet motif 1" evidence="5">
    <location>
        <begin position="41"/>
        <end position="44"/>
    </location>
</feature>
<feature type="short sequence motif" description="Processing quadruplet motif 2" evidence="5">
    <location>
        <begin position="80"/>
        <end position="83"/>
    </location>
</feature>
<feature type="modified residue" description="Pyrrolidone carboxylic acid" evidence="3">
    <location>
        <position position="84"/>
    </location>
</feature>
<comment type="function">
    <molecule>M-zodatoxin-Lt6a</molecule>
    <text evidence="2">Does not have antimicrobial activity against Gram-positive bacteria (A.globiformis VKM Ac-1112 (MIC&gt;70 uM) and B.subtilis VKM B-501 (MIC&gt;70 uM)), Gram-negative bacteria (E.coli DH5-alpha (MIC&gt;70 uM), E.coli MH1 (MIC&gt;70 uM) and P.aeruginosa PAO1 (MIC&gt;70 uM)), yeast (P.pastoris GS115 (MIC&gt;70 uM) or S.cerevisiae Y190 (MIC&gt;70 uM)). Does not have hemolytic activity against rabbit erythrocytes. However, it causes some conductance changes in planar bilayer membranes, without membrane rupture, suggesting a cytolytic function on other biological targets. It causes paralysis, but is not lethal when injected into insect larvae.</text>
</comment>
<comment type="subcellular location">
    <subcellularLocation>
        <location evidence="2 3">Secreted</location>
    </subcellularLocation>
</comment>
<comment type="tissue specificity">
    <text evidence="7 8">Expressed by the venom gland.</text>
</comment>
<comment type="domain">
    <text evidence="4">The mature peptides (45-79 and 84-116) probably form alpha-helices which disrupt target cell membranes.</text>
</comment>
<comment type="PTM">
    <text evidence="5">Cleavage of the propeptide depends on the processing quadruplet motif (XXXR, with at least one of X being E).</text>
</comment>
<comment type="mass spectrometry">
    <molecule>M-zodatoxin-Lt6a</molecule>
    <text>M-zodatoxin-Lt6a.</text>
</comment>
<comment type="similarity">
    <text evidence="6">Belongs to the cationic peptide 03 (latarcin) family. 06 subfamily.</text>
</comment>
<organism>
    <name type="scientific">Lachesana tarabaevi</name>
    <name type="common">Spider</name>
    <dbReference type="NCBI Taxonomy" id="379576"/>
    <lineage>
        <taxon>Eukaryota</taxon>
        <taxon>Metazoa</taxon>
        <taxon>Ecdysozoa</taxon>
        <taxon>Arthropoda</taxon>
        <taxon>Chelicerata</taxon>
        <taxon>Arachnida</taxon>
        <taxon>Araneae</taxon>
        <taxon>Araneomorphae</taxon>
        <taxon>Entelegynae</taxon>
        <taxon>Entelegynae incertae sedis</taxon>
        <taxon>Zodariidae</taxon>
        <taxon>Lachesana</taxon>
    </lineage>
</organism>
<reference key="1">
    <citation type="journal article" date="2006" name="J. Biol. Chem.">
        <title>Latarcins, antimicrobial and cytolytic peptides from the venom of the spider Lachesana tarabaevi (Zodariidae) that exemplify biomolecular diversity.</title>
        <authorList>
            <person name="Kozlov S.A."/>
            <person name="Vassilevski A.A."/>
            <person name="Feofanov A.V."/>
            <person name="Surovoy A.Y."/>
            <person name="Karpunin D.V."/>
            <person name="Grishin E.V."/>
        </authorList>
    </citation>
    <scope>NUCLEOTIDE SEQUENCE [MRNA]</scope>
    <scope>SYNTHESIS OF 84-116</scope>
    <scope>FUNCTION</scope>
    <scope>SUBCELLULAR LOCATION</scope>
    <scope>DOMAIN</scope>
    <source>
        <tissue>Venom</tissue>
        <tissue>Venom gland</tissue>
    </source>
</reference>
<reference key="2">
    <citation type="journal article" date="2016" name="Biochem. J.">
        <title>Lachesana tarabaevi, an expert in membrane-active toxins.</title>
        <authorList>
            <person name="Kuzmenkov A.I."/>
            <person name="Sachkova M.Y."/>
            <person name="Kovalchuk S.I."/>
            <person name="Grishin E.V."/>
            <person name="Vassilevski A.A."/>
        </authorList>
    </citation>
    <scope>PROTEIN SEQUENCE OF 84-116</scope>
    <scope>SUBCELLULAR LOCATION</scope>
    <scope>PQM MOTIF</scope>
    <scope>MASS SPECTROMETRY</scope>
    <scope>PYROGLUTAMATE FORMATION AT GLN-84</scope>
    <source>
        <tissue>Venom</tissue>
    </source>
</reference>
<dbReference type="EMBL" id="AM232692">
    <property type="protein sequence ID" value="CAJ81652.1"/>
    <property type="molecule type" value="mRNA"/>
</dbReference>
<dbReference type="SMR" id="Q1ELU7"/>
<dbReference type="ArachnoServer" id="AS000057">
    <property type="toxin name" value="M-zodatoxin-Lt6a"/>
</dbReference>
<dbReference type="ArachnoServer" id="AS000058">
    <property type="toxin name" value="M-zodatoxin-Lt6c"/>
</dbReference>
<dbReference type="GO" id="GO:0005576">
    <property type="term" value="C:extracellular region"/>
    <property type="evidence" value="ECO:0007669"/>
    <property type="project" value="UniProtKB-SubCell"/>
</dbReference>
<dbReference type="GO" id="GO:0090729">
    <property type="term" value="F:toxin activity"/>
    <property type="evidence" value="ECO:0007669"/>
    <property type="project" value="UniProtKB-KW"/>
</dbReference>
<dbReference type="InterPro" id="IPR018802">
    <property type="entry name" value="Latarcin_precursor"/>
</dbReference>
<dbReference type="Pfam" id="PF10279">
    <property type="entry name" value="Latarcin"/>
    <property type="match status" value="1"/>
</dbReference>
<accession>Q1ELU7</accession>
<keyword id="KW-0903">Direct protein sequencing</keyword>
<keyword id="KW-0873">Pyrrolidone carboxylic acid</keyword>
<keyword id="KW-0964">Secreted</keyword>
<keyword id="KW-0732">Signal</keyword>
<keyword id="KW-0800">Toxin</keyword>
<sequence>MKYFVVALTLAVAFVCIEECKTVEIGYAVSEDFDQNEIDNDEARQAFKTFTPDWNKIRNDAKRMQDNLEQMKKKFNLNLEEARQAFQTFKPDWNKIRYDAMKMQTSLGQMKKRFNL</sequence>
<proteinExistence type="evidence at protein level"/>
<name>LAT62_LACTA</name>